<organism>
    <name type="scientific">Crotalus adamanteus</name>
    <name type="common">Eastern diamondback rattlesnake</name>
    <dbReference type="NCBI Taxonomy" id="8729"/>
    <lineage>
        <taxon>Eukaryota</taxon>
        <taxon>Metazoa</taxon>
        <taxon>Chordata</taxon>
        <taxon>Craniata</taxon>
        <taxon>Vertebrata</taxon>
        <taxon>Euteleostomi</taxon>
        <taxon>Lepidosauria</taxon>
        <taxon>Squamata</taxon>
        <taxon>Bifurcata</taxon>
        <taxon>Unidentata</taxon>
        <taxon>Episquamata</taxon>
        <taxon>Toxicofera</taxon>
        <taxon>Serpentes</taxon>
        <taxon>Colubroidea</taxon>
        <taxon>Viperidae</taxon>
        <taxon>Crotalinae</taxon>
        <taxon>Crotalus</taxon>
    </lineage>
</organism>
<protein>
    <recommendedName>
        <fullName>Venom phosphodiesterase 1</fullName>
        <shortName>PDE</shortName>
        <ecNumber evidence="2">3.6.1.-</ecNumber>
    </recommendedName>
</protein>
<evidence type="ECO:0000250" key="1">
    <source>
        <dbReference type="UniProtKB" id="A0A2D0TC04"/>
    </source>
</evidence>
<evidence type="ECO:0000250" key="2">
    <source>
        <dbReference type="UniProtKB" id="W8E7D1"/>
    </source>
</evidence>
<evidence type="ECO:0000255" key="3"/>
<evidence type="ECO:0000255" key="4">
    <source>
        <dbReference type="PROSITE-ProRule" id="PRU00350"/>
    </source>
</evidence>
<evidence type="ECO:0000269" key="5">
    <source>
    </source>
</evidence>
<evidence type="ECO:0000305" key="6"/>
<evidence type="ECO:0000305" key="7">
    <source>
    </source>
</evidence>
<keyword id="KW-1015">Disulfide bond</keyword>
<keyword id="KW-0325">Glycoprotein</keyword>
<keyword id="KW-1199">Hemostasis impairing toxin</keyword>
<keyword id="KW-0378">Hydrolase</keyword>
<keyword id="KW-0479">Metal-binding</keyword>
<keyword id="KW-1201">Platelet aggregation inhibiting toxin</keyword>
<keyword id="KW-0677">Repeat</keyword>
<keyword id="KW-0964">Secreted</keyword>
<keyword id="KW-0732">Signal</keyword>
<keyword id="KW-0800">Toxin</keyword>
<accession>J3SEZ3</accession>
<accession>F8S0Z8</accession>
<dbReference type="EC" id="3.6.1.-" evidence="2"/>
<dbReference type="EMBL" id="HQ414102">
    <property type="protein sequence ID" value="AEJ31980.1"/>
    <property type="molecule type" value="mRNA"/>
</dbReference>
<dbReference type="EMBL" id="JU175352">
    <property type="protein sequence ID" value="AFJ50876.1"/>
    <property type="status" value="ALT_INIT"/>
    <property type="molecule type" value="mRNA"/>
</dbReference>
<dbReference type="SMR" id="J3SEZ3"/>
<dbReference type="GO" id="GO:0005576">
    <property type="term" value="C:extracellular region"/>
    <property type="evidence" value="ECO:0007669"/>
    <property type="project" value="UniProtKB-SubCell"/>
</dbReference>
<dbReference type="GO" id="GO:0043262">
    <property type="term" value="F:ADP phosphatase activity"/>
    <property type="evidence" value="ECO:0007669"/>
    <property type="project" value="RHEA"/>
</dbReference>
<dbReference type="GO" id="GO:0046872">
    <property type="term" value="F:metal ion binding"/>
    <property type="evidence" value="ECO:0007669"/>
    <property type="project" value="UniProtKB-KW"/>
</dbReference>
<dbReference type="GO" id="GO:0003676">
    <property type="term" value="F:nucleic acid binding"/>
    <property type="evidence" value="ECO:0007669"/>
    <property type="project" value="InterPro"/>
</dbReference>
<dbReference type="GO" id="GO:0047429">
    <property type="term" value="F:nucleoside triphosphate diphosphatase activity"/>
    <property type="evidence" value="ECO:0007669"/>
    <property type="project" value="TreeGrafter"/>
</dbReference>
<dbReference type="GO" id="GO:0090729">
    <property type="term" value="F:toxin activity"/>
    <property type="evidence" value="ECO:0007669"/>
    <property type="project" value="UniProtKB-KW"/>
</dbReference>
<dbReference type="GO" id="GO:0009143">
    <property type="term" value="P:nucleoside triphosphate catabolic process"/>
    <property type="evidence" value="ECO:0007669"/>
    <property type="project" value="TreeGrafter"/>
</dbReference>
<dbReference type="CDD" id="cd16018">
    <property type="entry name" value="Enpp"/>
    <property type="match status" value="1"/>
</dbReference>
<dbReference type="CDD" id="cd00091">
    <property type="entry name" value="NUC"/>
    <property type="match status" value="1"/>
</dbReference>
<dbReference type="FunFam" id="4.10.410.20:FF:000001">
    <property type="entry name" value="Ectonucleotide pyrophosphatase/phosphodiesterase family member 2"/>
    <property type="match status" value="1"/>
</dbReference>
<dbReference type="Gene3D" id="4.10.410.20">
    <property type="match status" value="2"/>
</dbReference>
<dbReference type="Gene3D" id="3.40.720.10">
    <property type="entry name" value="Alkaline Phosphatase, subunit A"/>
    <property type="match status" value="1"/>
</dbReference>
<dbReference type="Gene3D" id="3.40.570.10">
    <property type="entry name" value="Extracellular Endonuclease, subunit A"/>
    <property type="match status" value="1"/>
</dbReference>
<dbReference type="InterPro" id="IPR017850">
    <property type="entry name" value="Alkaline_phosphatase_core_sf"/>
</dbReference>
<dbReference type="InterPro" id="IPR044929">
    <property type="entry name" value="DNA/RNA_non-sp_Endonuclease_sf"/>
</dbReference>
<dbReference type="InterPro" id="IPR001604">
    <property type="entry name" value="Endo_G_ENPP1-like_dom"/>
</dbReference>
<dbReference type="InterPro" id="IPR020821">
    <property type="entry name" value="ENPP1-3/EXOG-like_nuc-like"/>
</dbReference>
<dbReference type="InterPro" id="IPR044925">
    <property type="entry name" value="His-Me_finger_sf"/>
</dbReference>
<dbReference type="InterPro" id="IPR002591">
    <property type="entry name" value="Phosphodiest/P_Trfase"/>
</dbReference>
<dbReference type="InterPro" id="IPR036024">
    <property type="entry name" value="Somatomedin_B-like_dom_sf"/>
</dbReference>
<dbReference type="InterPro" id="IPR001212">
    <property type="entry name" value="Somatomedin_B_dom"/>
</dbReference>
<dbReference type="PANTHER" id="PTHR10151">
    <property type="entry name" value="ECTONUCLEOTIDE PYROPHOSPHATASE/PHOSPHODIESTERASE"/>
    <property type="match status" value="1"/>
</dbReference>
<dbReference type="PANTHER" id="PTHR10151:SF107">
    <property type="entry name" value="ECTONUCLEOTIDE PYROPHOSPHATASE_PHOSPHODIESTERASE FAMILY MEMBER 3"/>
    <property type="match status" value="1"/>
</dbReference>
<dbReference type="Pfam" id="PF01223">
    <property type="entry name" value="Endonuclease_NS"/>
    <property type="match status" value="1"/>
</dbReference>
<dbReference type="Pfam" id="PF01663">
    <property type="entry name" value="Phosphodiest"/>
    <property type="match status" value="1"/>
</dbReference>
<dbReference type="Pfam" id="PF01033">
    <property type="entry name" value="Somatomedin_B"/>
    <property type="match status" value="2"/>
</dbReference>
<dbReference type="SMART" id="SM00892">
    <property type="entry name" value="Endonuclease_NS"/>
    <property type="match status" value="1"/>
</dbReference>
<dbReference type="SMART" id="SM00477">
    <property type="entry name" value="NUC"/>
    <property type="match status" value="1"/>
</dbReference>
<dbReference type="SMART" id="SM00201">
    <property type="entry name" value="SO"/>
    <property type="match status" value="2"/>
</dbReference>
<dbReference type="SUPFAM" id="SSF53649">
    <property type="entry name" value="Alkaline phosphatase-like"/>
    <property type="match status" value="1"/>
</dbReference>
<dbReference type="SUPFAM" id="SSF54060">
    <property type="entry name" value="His-Me finger endonucleases"/>
    <property type="match status" value="1"/>
</dbReference>
<dbReference type="SUPFAM" id="SSF90188">
    <property type="entry name" value="Somatomedin B domain"/>
    <property type="match status" value="2"/>
</dbReference>
<dbReference type="PROSITE" id="PS00524">
    <property type="entry name" value="SMB_1"/>
    <property type="match status" value="2"/>
</dbReference>
<dbReference type="PROSITE" id="PS50958">
    <property type="entry name" value="SMB_2"/>
    <property type="match status" value="2"/>
</dbReference>
<sequence length="851" mass="96373">MIQQKVLFISLVAVTLGLGLGLGLKESVQPQVSCRYRCNETFSKMASGCSCDDKCTERQACCSDYEDTCVLPTQSWSCSKLRCGEKRIANVLCSCSDDCLEKKDCCTDYKSICKGETSWLKDKCASSGATQCPAGFEQSPLILFSMDGFRAGYLENWDSLMPNINKLKTCGTHAKYMRAVYPTKTFVNHYTIATGLYPESHGIIDNNIYDVNLNLNFSLSSSTARNPAWWGGQPIWHTATYQGLKAATYFWPGSEVKINGSYPTIFKNYNKSIPFEARVTEVLKWLDLPKAKRPDFLTLYIEEPDTTGHKYGPVSGEIIKALQMADRTLGMLMEGLKQRNLHNCVNLILLADHGMEEISCDRLEYMANYFNNVDFFMYEGPAPRIRSKNVPKDFYTFDSEGIVKNLTCRKPKQYFKAYLSKDLPKRLHYANNIRIDKVNLMVDQQWMAVRDKKFTRCKGGTHGYDNEFKSMQAIFLAHGPGFNEKNEVTSFENIEVYNLMCDLLKLKPAPNNGTHGSLNHLLKNPFYTPSPAKEQSSPLSCPFGPVPSPDVSGCKCSSITELEKVNQRLNLNNQAKTESEAHNLPYGRPQVLQNHSKYCLLHQAKYISAYSQDILMPLWSSYTIYRSTSTSVPPSASDCLRLDVRIPAAQSQTCSNYQPDLTITPGFLYPPNFNSSNFEQYDALITSNIVPMFKGFTRLWNYFHTTLIPKYARERNGLNVISGPIFDYNYDGHFDSYDTIKQHVNNTKIPIPTHYFVVLTSCENQINTPLNCLGPLKVLSFILPHRPDNSESCADTSPENLWVEERIQIHTARVRDVELLTGLNFYSGLKQPLPETLQLKTFLPIFVNPVN</sequence>
<reference key="1">
    <citation type="journal article" date="2011" name="Toxicon">
        <title>A high-throughput venom-gland transcriptome for the eastern diamondback rattlesnake (Crotalus adamanteus) and evidence for pervasive positive selection across toxin classes.</title>
        <authorList>
            <person name="Rokyta D.R."/>
            <person name="Wray K.P."/>
            <person name="Lemmon A.R."/>
            <person name="Lemmon E.M."/>
            <person name="Caudle S.B."/>
        </authorList>
    </citation>
    <scope>NUCLEOTIDE SEQUENCE [MRNA]</scope>
    <source>
        <tissue>Venom gland</tissue>
    </source>
</reference>
<reference key="2">
    <citation type="journal article" date="2012" name="BMC Genomics">
        <title>The venom-gland transcriptome of the eastern diamondback rattlesnake (Crotalus adamanteus).</title>
        <authorList>
            <person name="Rokyta D.R."/>
            <person name="Lemmon A.R."/>
            <person name="Margres M.J."/>
            <person name="Aronow K."/>
        </authorList>
    </citation>
    <scope>NUCLEOTIDE SEQUENCE [MRNA]</scope>
    <source>
        <tissue>Venom gland</tissue>
    </source>
</reference>
<reference key="3">
    <citation type="journal article" date="2014" name="J. Proteomics">
        <title>Linking the transcriptome and proteome to characterize the venom of the eastern diamondback rattlesnake (Crotalus adamanteus).</title>
        <authorList>
            <person name="Margres M.J."/>
            <person name="McGivern J.J."/>
            <person name="Wray K.P."/>
            <person name="Seavy M."/>
            <person name="Calvin K."/>
            <person name="Rokyta D.R."/>
        </authorList>
    </citation>
    <scope>IDENTIFICATION BY MASS SPECTROMETRY</scope>
    <scope>SUBCELLULAR LOCATION</scope>
    <source>
        <tissue>Venom</tissue>
    </source>
</reference>
<name>PDE1_CROAD</name>
<proteinExistence type="evidence at protein level"/>
<feature type="signal peptide" evidence="3">
    <location>
        <begin position="1"/>
        <end position="23"/>
    </location>
</feature>
<feature type="chain" id="PRO_5000771368" description="Venom phosphodiesterase 1">
    <location>
        <begin position="24"/>
        <end position="851"/>
    </location>
</feature>
<feature type="domain" description="SMB 1" evidence="4">
    <location>
        <begin position="30"/>
        <end position="73"/>
    </location>
</feature>
<feature type="domain" description="SMB 2" evidence="4">
    <location>
        <begin position="74"/>
        <end position="118"/>
    </location>
</feature>
<feature type="short sequence motif" description="Cell attachment site" evidence="3">
    <location>
        <begin position="58"/>
        <end position="60"/>
    </location>
</feature>
<feature type="active site" description="AMP-threonine intermediate" evidence="1">
    <location>
        <position position="185"/>
    </location>
</feature>
<feature type="binding site" evidence="1">
    <location>
        <position position="147"/>
    </location>
    <ligand>
        <name>a divalent metal cation</name>
        <dbReference type="ChEBI" id="CHEBI:60240"/>
        <label>2</label>
    </ligand>
</feature>
<feature type="binding site" evidence="1">
    <location>
        <position position="185"/>
    </location>
    <ligand>
        <name>a divalent metal cation</name>
        <dbReference type="ChEBI" id="CHEBI:60240"/>
        <label>2</label>
    </ligand>
</feature>
<feature type="binding site" evidence="1">
    <location>
        <position position="271"/>
    </location>
    <ligand>
        <name>AMP</name>
        <dbReference type="ChEBI" id="CHEBI:456215"/>
    </ligand>
</feature>
<feature type="binding site" evidence="1">
    <location>
        <position position="305"/>
    </location>
    <ligand>
        <name>a divalent metal cation</name>
        <dbReference type="ChEBI" id="CHEBI:60240"/>
        <label>1</label>
    </ligand>
</feature>
<feature type="binding site" evidence="1">
    <location>
        <position position="309"/>
    </location>
    <ligand>
        <name>a divalent metal cation</name>
        <dbReference type="ChEBI" id="CHEBI:60240"/>
        <label>1</label>
    </ligand>
</feature>
<feature type="binding site" evidence="1">
    <location>
        <position position="309"/>
    </location>
    <ligand>
        <name>AMP</name>
        <dbReference type="ChEBI" id="CHEBI:456215"/>
    </ligand>
</feature>
<feature type="binding site" evidence="1">
    <location>
        <position position="352"/>
    </location>
    <ligand>
        <name>a divalent metal cation</name>
        <dbReference type="ChEBI" id="CHEBI:60240"/>
        <label>2</label>
    </ligand>
</feature>
<feature type="binding site" evidence="1">
    <location>
        <position position="353"/>
    </location>
    <ligand>
        <name>a divalent metal cation</name>
        <dbReference type="ChEBI" id="CHEBI:60240"/>
        <label>2</label>
    </ligand>
</feature>
<feature type="binding site" evidence="1">
    <location>
        <position position="462"/>
    </location>
    <ligand>
        <name>a divalent metal cation</name>
        <dbReference type="ChEBI" id="CHEBI:60240"/>
        <label>1</label>
    </ligand>
</feature>
<feature type="glycosylation site" description="N-linked (GlcNAc...) asparagine" evidence="3">
    <location>
        <position position="39"/>
    </location>
</feature>
<feature type="glycosylation site" description="N-linked (GlcNAc...) asparagine" evidence="3">
    <location>
        <position position="216"/>
    </location>
</feature>
<feature type="glycosylation site" description="N-linked (GlcNAc...) asparagine" evidence="3">
    <location>
        <position position="259"/>
    </location>
</feature>
<feature type="glycosylation site" description="N-linked (GlcNAc...) asparagine" evidence="3">
    <location>
        <position position="270"/>
    </location>
</feature>
<feature type="glycosylation site" description="N-linked (GlcNAc...) asparagine" evidence="3">
    <location>
        <position position="405"/>
    </location>
</feature>
<feature type="glycosylation site" description="N-linked (GlcNAc...) asparagine" evidence="3">
    <location>
        <position position="512"/>
    </location>
</feature>
<feature type="glycosylation site" description="N-linked (GlcNAc...) asparagine" evidence="3">
    <location>
        <position position="594"/>
    </location>
</feature>
<feature type="glycosylation site" description="N-linked (GlcNAc...) asparagine" evidence="3">
    <location>
        <position position="674"/>
    </location>
</feature>
<feature type="glycosylation site" description="N-linked (GlcNAc...) asparagine" evidence="3">
    <location>
        <position position="745"/>
    </location>
</feature>
<feature type="disulfide bond" description="Alternate" evidence="1">
    <location>
        <begin position="34"/>
        <end position="51"/>
    </location>
</feature>
<feature type="disulfide bond" description="Alternate" evidence="4">
    <location>
        <begin position="34"/>
        <end position="38"/>
    </location>
</feature>
<feature type="disulfide bond" description="Alternate" evidence="1">
    <location>
        <begin position="38"/>
        <end position="69"/>
    </location>
</feature>
<feature type="disulfide bond" description="Alternate" evidence="1">
    <location>
        <begin position="49"/>
        <end position="62"/>
    </location>
</feature>
<feature type="disulfide bond" description="Alternate" evidence="4">
    <location>
        <begin position="49"/>
        <end position="51"/>
    </location>
</feature>
<feature type="disulfide bond" evidence="1">
    <location>
        <begin position="55"/>
        <end position="61"/>
    </location>
</feature>
<feature type="disulfide bond" description="Alternate" evidence="4">
    <location>
        <begin position="62"/>
        <end position="69"/>
    </location>
</feature>
<feature type="disulfide bond" description="Alternate" evidence="1">
    <location>
        <begin position="78"/>
        <end position="95"/>
    </location>
</feature>
<feature type="disulfide bond" description="Alternate" evidence="4">
    <location>
        <begin position="78"/>
        <end position="83"/>
    </location>
</feature>
<feature type="disulfide bond" description="Alternate" evidence="1">
    <location>
        <begin position="83"/>
        <end position="113"/>
    </location>
</feature>
<feature type="disulfide bond" description="Alternate" evidence="1">
    <location>
        <begin position="93"/>
        <end position="106"/>
    </location>
</feature>
<feature type="disulfide bond" description="Alternate" evidence="4">
    <location>
        <begin position="93"/>
        <end position="95"/>
    </location>
</feature>
<feature type="disulfide bond" evidence="1">
    <location>
        <begin position="99"/>
        <end position="105"/>
    </location>
</feature>
<feature type="disulfide bond" description="Alternate" evidence="4">
    <location>
        <begin position="106"/>
        <end position="113"/>
    </location>
</feature>
<feature type="disulfide bond" evidence="1">
    <location>
        <begin position="124"/>
        <end position="170"/>
    </location>
</feature>
<feature type="disulfide bond" evidence="1">
    <location>
        <begin position="132"/>
        <end position="344"/>
    </location>
</feature>
<feature type="disulfide bond" evidence="1">
    <location>
        <begin position="360"/>
        <end position="457"/>
    </location>
</feature>
<feature type="disulfide bond" evidence="1">
    <location>
        <begin position="408"/>
        <end position="793"/>
    </location>
</feature>
<feature type="disulfide bond" evidence="1">
    <location>
        <begin position="541"/>
        <end position="599"/>
    </location>
</feature>
<feature type="disulfide bond" evidence="1">
    <location>
        <begin position="554"/>
        <end position="654"/>
    </location>
</feature>
<feature type="disulfide bond" evidence="1">
    <location>
        <begin position="556"/>
        <end position="639"/>
    </location>
</feature>
<feature type="disulfide bond" evidence="1">
    <location>
        <begin position="762"/>
        <end position="772"/>
    </location>
</feature>
<comment type="function">
    <text evidence="2">Hydrolyzes ADP with high activity. Shows weak or no activity on 5'-AMP, 5'-GMP, 3'-AMP, ATP, cAMP, and cGMP. Is devoid of monophosphatase and proteinase activities. Dose-dependently inhibits platelet aggregation induced by ADP and collagen.</text>
</comment>
<comment type="catalytic activity">
    <reaction evidence="2">
        <text>ADP + H2O = AMP + phosphate + H(+)</text>
        <dbReference type="Rhea" id="RHEA:61436"/>
        <dbReference type="ChEBI" id="CHEBI:15377"/>
        <dbReference type="ChEBI" id="CHEBI:15378"/>
        <dbReference type="ChEBI" id="CHEBI:43474"/>
        <dbReference type="ChEBI" id="CHEBI:456215"/>
        <dbReference type="ChEBI" id="CHEBI:456216"/>
    </reaction>
</comment>
<comment type="cofactor">
    <cofactor evidence="2">
        <name>a divalent metal cation</name>
        <dbReference type="ChEBI" id="CHEBI:60240"/>
    </cofactor>
    <text evidence="2">Binds 2 divalent metal cations per subunit.</text>
</comment>
<comment type="subunit">
    <text evidence="2">Monomer cleaved in two subunits; disulfide-linked. Is synthesized as a single-chain protein and is subsequently cleaved to form a two-subunit protein held together with disulfide bonds.</text>
</comment>
<comment type="subcellular location">
    <subcellularLocation>
        <location evidence="5">Secreted</location>
    </subcellularLocation>
</comment>
<comment type="tissue specificity">
    <text evidence="7">Expressed by venom gland.</text>
</comment>
<comment type="similarity">
    <text evidence="6">Belongs to the nucleotide pyrophosphatase/phosphodiesterase family.</text>
</comment>
<comment type="sequence caution" evidence="6">
    <conflict type="erroneous initiation">
        <sequence resource="EMBL-CDS" id="AFJ50876"/>
    </conflict>
    <text>Extended N-terminus.</text>
</comment>